<feature type="chain" id="PRO_0000343721" description="Transmembrane protein 253">
    <location>
        <begin position="1"/>
        <end position="165"/>
    </location>
</feature>
<feature type="transmembrane region" description="Helical" evidence="1">
    <location>
        <begin position="31"/>
        <end position="51"/>
    </location>
</feature>
<feature type="transmembrane region" description="Helical" evidence="1">
    <location>
        <begin position="60"/>
        <end position="80"/>
    </location>
</feature>
<feature type="transmembrane region" description="Helical" evidence="1">
    <location>
        <begin position="91"/>
        <end position="111"/>
    </location>
</feature>
<feature type="region of interest" description="Disordered" evidence="2">
    <location>
        <begin position="145"/>
        <end position="165"/>
    </location>
</feature>
<feature type="compositionally biased region" description="Polar residues" evidence="2">
    <location>
        <begin position="155"/>
        <end position="165"/>
    </location>
</feature>
<sequence length="165" mass="18153">MEDRAGQQERPSLRLEKLQHWARHRQSGRLLVLAVSQLWLAVAVVPFAVSVACLNSACHMTTALPLGPGILGLLTGIVTLELRRAPRLWKLAGLLVLELSAEAFTLGGVLVSAYSLFLLSQRKPRCCRSQSLRYQELQEGLSELEEVPELETGPTVASTAKRTNQ</sequence>
<reference key="1">
    <citation type="submission" date="2006-08" db="EMBL/GenBank/DDBJ databases">
        <authorList>
            <consortium name="NIH - Mammalian Gene Collection (MGC) project"/>
        </authorList>
    </citation>
    <scope>NUCLEOTIDE SEQUENCE [LARGE SCALE MRNA]</scope>
    <source>
        <strain>Crossbred X Angus</strain>
        <tissue>Ileum</tissue>
    </source>
</reference>
<organism>
    <name type="scientific">Bos taurus</name>
    <name type="common">Bovine</name>
    <dbReference type="NCBI Taxonomy" id="9913"/>
    <lineage>
        <taxon>Eukaryota</taxon>
        <taxon>Metazoa</taxon>
        <taxon>Chordata</taxon>
        <taxon>Craniata</taxon>
        <taxon>Vertebrata</taxon>
        <taxon>Euteleostomi</taxon>
        <taxon>Mammalia</taxon>
        <taxon>Eutheria</taxon>
        <taxon>Laurasiatheria</taxon>
        <taxon>Artiodactyla</taxon>
        <taxon>Ruminantia</taxon>
        <taxon>Pecora</taxon>
        <taxon>Bovidae</taxon>
        <taxon>Bovinae</taxon>
        <taxon>Bos</taxon>
    </lineage>
</organism>
<keyword id="KW-0472">Membrane</keyword>
<keyword id="KW-1185">Reference proteome</keyword>
<keyword id="KW-0812">Transmembrane</keyword>
<keyword id="KW-1133">Transmembrane helix</keyword>
<protein>
    <recommendedName>
        <fullName>Transmembrane protein 253</fullName>
    </recommendedName>
</protein>
<proteinExistence type="evidence at transcript level"/>
<dbReference type="EMBL" id="BC122773">
    <property type="protein sequence ID" value="AAI22774.1"/>
    <property type="molecule type" value="mRNA"/>
</dbReference>
<dbReference type="RefSeq" id="NP_001069196.1">
    <property type="nucleotide sequence ID" value="NM_001075728.2"/>
</dbReference>
<dbReference type="FunCoup" id="Q0II74">
    <property type="interactions" value="10"/>
</dbReference>
<dbReference type="PaxDb" id="9913-ENSBTAP00000051437"/>
<dbReference type="Ensembl" id="ENSBTAT00000055545.2">
    <property type="protein sequence ID" value="ENSBTAP00000051437.1"/>
    <property type="gene ID" value="ENSBTAG00000032908.5"/>
</dbReference>
<dbReference type="GeneID" id="515865"/>
<dbReference type="KEGG" id="bta:515865"/>
<dbReference type="CTD" id="643382"/>
<dbReference type="VEuPathDB" id="HostDB:ENSBTAG00000032908"/>
<dbReference type="VGNC" id="VGNC:36062">
    <property type="gene designation" value="TMEM253"/>
</dbReference>
<dbReference type="eggNOG" id="ENOG502S0TM">
    <property type="taxonomic scope" value="Eukaryota"/>
</dbReference>
<dbReference type="GeneTree" id="ENSGT00400000023212"/>
<dbReference type="HOGENOM" id="CLU_1405518_0_0_1"/>
<dbReference type="InParanoid" id="Q0II74"/>
<dbReference type="OMA" id="PRLWKVQ"/>
<dbReference type="OrthoDB" id="8943932at2759"/>
<dbReference type="TreeFam" id="TF354003"/>
<dbReference type="Proteomes" id="UP000009136">
    <property type="component" value="Chromosome 10"/>
</dbReference>
<dbReference type="Bgee" id="ENSBTAG00000032908">
    <property type="expression patterns" value="Expressed in rumen papilla and 52 other cell types or tissues"/>
</dbReference>
<dbReference type="GO" id="GO:0016020">
    <property type="term" value="C:membrane"/>
    <property type="evidence" value="ECO:0007669"/>
    <property type="project" value="UniProtKB-SubCell"/>
</dbReference>
<dbReference type="InterPro" id="IPR038874">
    <property type="entry name" value="TMEM253"/>
</dbReference>
<dbReference type="PANTHER" id="PTHR37359">
    <property type="entry name" value="TRANSMEMBRANE PROTEIN 253"/>
    <property type="match status" value="1"/>
</dbReference>
<dbReference type="PANTHER" id="PTHR37359:SF1">
    <property type="entry name" value="TRANSMEMBRANE PROTEIN 253"/>
    <property type="match status" value="1"/>
</dbReference>
<evidence type="ECO:0000255" key="1"/>
<evidence type="ECO:0000256" key="2">
    <source>
        <dbReference type="SAM" id="MobiDB-lite"/>
    </source>
</evidence>
<evidence type="ECO:0000305" key="3"/>
<gene>
    <name type="primary">TMEM253</name>
</gene>
<comment type="subcellular location">
    <subcellularLocation>
        <location evidence="3">Membrane</location>
        <topology evidence="3">Multi-pass membrane protein</topology>
    </subcellularLocation>
</comment>
<accession>Q0II74</accession>
<name>TM253_BOVIN</name>